<accession>A1CIM7</accession>
<keyword id="KW-0325">Glycoprotein</keyword>
<keyword id="KW-0333">Golgi apparatus</keyword>
<keyword id="KW-0472">Membrane</keyword>
<keyword id="KW-1185">Reference proteome</keyword>
<keyword id="KW-0812">Transmembrane</keyword>
<keyword id="KW-1133">Transmembrane helix</keyword>
<evidence type="ECO:0000250" key="1"/>
<evidence type="ECO:0000255" key="2"/>
<evidence type="ECO:0000305" key="3"/>
<dbReference type="EMBL" id="DS027054">
    <property type="protein sequence ID" value="EAW10732.1"/>
    <property type="molecule type" value="Genomic_DNA"/>
</dbReference>
<dbReference type="RefSeq" id="XP_001272158.1">
    <property type="nucleotide sequence ID" value="XM_001272157.1"/>
</dbReference>
<dbReference type="STRING" id="344612.A1CIM7"/>
<dbReference type="GlyCosmos" id="A1CIM7">
    <property type="glycosylation" value="2 sites, No reported glycans"/>
</dbReference>
<dbReference type="EnsemblFungi" id="EAW10732">
    <property type="protein sequence ID" value="EAW10732"/>
    <property type="gene ID" value="ACLA_052040"/>
</dbReference>
<dbReference type="GeneID" id="4703690"/>
<dbReference type="KEGG" id="act:ACLA_052040"/>
<dbReference type="VEuPathDB" id="FungiDB:ACLA_052040"/>
<dbReference type="eggNOG" id="KOG3195">
    <property type="taxonomic scope" value="Eukaryota"/>
</dbReference>
<dbReference type="HOGENOM" id="CLU_074845_1_1_1"/>
<dbReference type="OMA" id="KMIWWID"/>
<dbReference type="OrthoDB" id="2151161at2759"/>
<dbReference type="Proteomes" id="UP000006701">
    <property type="component" value="Unassembled WGS sequence"/>
</dbReference>
<dbReference type="GO" id="GO:0000139">
    <property type="term" value="C:Golgi membrane"/>
    <property type="evidence" value="ECO:0007669"/>
    <property type="project" value="UniProtKB-SubCell"/>
</dbReference>
<dbReference type="GO" id="GO:0009306">
    <property type="term" value="P:protein secretion"/>
    <property type="evidence" value="ECO:0007669"/>
    <property type="project" value="TreeGrafter"/>
</dbReference>
<dbReference type="GO" id="GO:0016192">
    <property type="term" value="P:vesicle-mediated transport"/>
    <property type="evidence" value="ECO:0007669"/>
    <property type="project" value="EnsemblFungi"/>
</dbReference>
<dbReference type="InterPro" id="IPR008564">
    <property type="entry name" value="TVP23-like"/>
</dbReference>
<dbReference type="PANTHER" id="PTHR13019">
    <property type="entry name" value="GOLGI APPARATUS MEMBRANE PROTEIN TVP23"/>
    <property type="match status" value="1"/>
</dbReference>
<dbReference type="PANTHER" id="PTHR13019:SF7">
    <property type="entry name" value="GOLGI APPARATUS MEMBRANE PROTEIN TVP23"/>
    <property type="match status" value="1"/>
</dbReference>
<dbReference type="Pfam" id="PF05832">
    <property type="entry name" value="DUF846"/>
    <property type="match status" value="1"/>
</dbReference>
<proteinExistence type="inferred from homology"/>
<gene>
    <name type="primary">tvp23</name>
    <name type="ORF">ACLA_052040</name>
</gene>
<name>TVP23_ASPCL</name>
<reference key="1">
    <citation type="journal article" date="2008" name="PLoS Genet.">
        <title>Genomic islands in the pathogenic filamentous fungus Aspergillus fumigatus.</title>
        <authorList>
            <person name="Fedorova N.D."/>
            <person name="Khaldi N."/>
            <person name="Joardar V.S."/>
            <person name="Maiti R."/>
            <person name="Amedeo P."/>
            <person name="Anderson M.J."/>
            <person name="Crabtree J."/>
            <person name="Silva J.C."/>
            <person name="Badger J.H."/>
            <person name="Albarraq A."/>
            <person name="Angiuoli S."/>
            <person name="Bussey H."/>
            <person name="Bowyer P."/>
            <person name="Cotty P.J."/>
            <person name="Dyer P.S."/>
            <person name="Egan A."/>
            <person name="Galens K."/>
            <person name="Fraser-Liggett C.M."/>
            <person name="Haas B.J."/>
            <person name="Inman J.M."/>
            <person name="Kent R."/>
            <person name="Lemieux S."/>
            <person name="Malavazi I."/>
            <person name="Orvis J."/>
            <person name="Roemer T."/>
            <person name="Ronning C.M."/>
            <person name="Sundaram J.P."/>
            <person name="Sutton G."/>
            <person name="Turner G."/>
            <person name="Venter J.C."/>
            <person name="White O.R."/>
            <person name="Whitty B.R."/>
            <person name="Youngman P."/>
            <person name="Wolfe K.H."/>
            <person name="Goldman G.H."/>
            <person name="Wortman J.R."/>
            <person name="Jiang B."/>
            <person name="Denning D.W."/>
            <person name="Nierman W.C."/>
        </authorList>
    </citation>
    <scope>NUCLEOTIDE SEQUENCE [LARGE SCALE GENOMIC DNA]</scope>
    <source>
        <strain>ATCC 1007 / CBS 513.65 / DSM 816 / NCTC 3887 / NRRL 1 / QM 1276 / 107</strain>
    </source>
</reference>
<sequence length="191" mass="21440">MDQPLQPQQGELNWRLSAHPITLLCFLGFRSSALLMYLFGVLFIKNFVLVFILTLLLLSADFYYLKNIAGRRLVGLRWWNEVNTSTGDSHWVFESSDPTTRTITATDKRFFWLGLYITPALWIGLAVLAIVTLSKIIWLSLVAIALILTITNTVAFSRCDRFGQASTFANRAFGGSIVSNITGGLLGRLFK</sequence>
<protein>
    <recommendedName>
        <fullName>Golgi apparatus membrane protein tvp23</fullName>
    </recommendedName>
</protein>
<feature type="chain" id="PRO_0000343035" description="Golgi apparatus membrane protein tvp23">
    <location>
        <begin position="1"/>
        <end position="191"/>
    </location>
</feature>
<feature type="transmembrane region" description="Helical" evidence="2">
    <location>
        <begin position="16"/>
        <end position="36"/>
    </location>
</feature>
<feature type="transmembrane region" description="Helical" evidence="2">
    <location>
        <begin position="38"/>
        <end position="58"/>
    </location>
</feature>
<feature type="transmembrane region" description="Helical" evidence="2">
    <location>
        <begin position="110"/>
        <end position="130"/>
    </location>
</feature>
<feature type="transmembrane region" description="Helical" evidence="2">
    <location>
        <begin position="136"/>
        <end position="156"/>
    </location>
</feature>
<feature type="glycosylation site" description="N-linked (GlcNAc...) asparagine" evidence="2">
    <location>
        <position position="83"/>
    </location>
</feature>
<feature type="glycosylation site" description="N-linked (GlcNAc...) asparagine" evidence="2">
    <location>
        <position position="180"/>
    </location>
</feature>
<comment type="function">
    <text evidence="1">Golgi membrane protein involved in vesicular trafficking.</text>
</comment>
<comment type="subcellular location">
    <subcellularLocation>
        <location evidence="1">Golgi apparatus membrane</location>
        <topology evidence="1">Multi-pass membrane protein</topology>
    </subcellularLocation>
</comment>
<comment type="similarity">
    <text evidence="3">Belongs to the TVP23 family.</text>
</comment>
<organism>
    <name type="scientific">Aspergillus clavatus (strain ATCC 1007 / CBS 513.65 / DSM 816 / NCTC 3887 / NRRL 1 / QM 1276 / 107)</name>
    <dbReference type="NCBI Taxonomy" id="344612"/>
    <lineage>
        <taxon>Eukaryota</taxon>
        <taxon>Fungi</taxon>
        <taxon>Dikarya</taxon>
        <taxon>Ascomycota</taxon>
        <taxon>Pezizomycotina</taxon>
        <taxon>Eurotiomycetes</taxon>
        <taxon>Eurotiomycetidae</taxon>
        <taxon>Eurotiales</taxon>
        <taxon>Aspergillaceae</taxon>
        <taxon>Aspergillus</taxon>
        <taxon>Aspergillus subgen. Fumigati</taxon>
    </lineage>
</organism>